<organism>
    <name type="scientific">Mycobacterium bovis (strain ATCC BAA-935 / AF2122/97)</name>
    <dbReference type="NCBI Taxonomy" id="233413"/>
    <lineage>
        <taxon>Bacteria</taxon>
        <taxon>Bacillati</taxon>
        <taxon>Actinomycetota</taxon>
        <taxon>Actinomycetes</taxon>
        <taxon>Mycobacteriales</taxon>
        <taxon>Mycobacteriaceae</taxon>
        <taxon>Mycobacterium</taxon>
        <taxon>Mycobacterium tuberculosis complex</taxon>
    </lineage>
</organism>
<protein>
    <recommendedName>
        <fullName>Phosphate-specific transport system accessory protein PhoU homolog 2</fullName>
        <shortName>Pst system accessory protein PhoU homolog 2</shortName>
    </recommendedName>
</protein>
<sequence>MRTAYHEQLSELSERLGEMCGLAGIAMERATQALLQADLVLAEQVISDHEKIATLSARAEESAFVLLALQAPVAGDLRAIVSAIQMVADIDRMGALALHVAKIARRRHPQHALPEEVNGYFAEMGRVAVELGNSAQEVVLSHDPEKAAQIREEDDAMDDLHRHLFTVLMDREWKHGVAAAVDVTLLSRFYERFADHAVEVARRVIFQATGAFP</sequence>
<evidence type="ECO:0000250" key="1"/>
<evidence type="ECO:0000305" key="2"/>
<gene>
    <name type="primary">phoU2</name>
    <name type="synonym">phoY2</name>
    <name type="ordered locus">BQ2027_MB0844C</name>
</gene>
<feature type="chain" id="PRO_0000155174" description="Phosphate-specific transport system accessory protein PhoU homolog 2">
    <location>
        <begin position="1"/>
        <end position="213"/>
    </location>
</feature>
<keyword id="KW-0963">Cytoplasm</keyword>
<keyword id="KW-0592">Phosphate transport</keyword>
<keyword id="KW-1185">Reference proteome</keyword>
<keyword id="KW-0813">Transport</keyword>
<reference key="1">
    <citation type="journal article" date="2003" name="Proc. Natl. Acad. Sci. U.S.A.">
        <title>The complete genome sequence of Mycobacterium bovis.</title>
        <authorList>
            <person name="Garnier T."/>
            <person name="Eiglmeier K."/>
            <person name="Camus J.-C."/>
            <person name="Medina N."/>
            <person name="Mansoor H."/>
            <person name="Pryor M."/>
            <person name="Duthoy S."/>
            <person name="Grondin S."/>
            <person name="Lacroix C."/>
            <person name="Monsempe C."/>
            <person name="Simon S."/>
            <person name="Harris B."/>
            <person name="Atkin R."/>
            <person name="Doggett J."/>
            <person name="Mayes R."/>
            <person name="Keating L."/>
            <person name="Wheeler P.R."/>
            <person name="Parkhill J."/>
            <person name="Barrell B.G."/>
            <person name="Cole S.T."/>
            <person name="Gordon S.V."/>
            <person name="Hewinson R.G."/>
        </authorList>
    </citation>
    <scope>NUCLEOTIDE SEQUENCE [LARGE SCALE GENOMIC DNA]</scope>
    <source>
        <strain>ATCC BAA-935 / AF2122/97</strain>
    </source>
</reference>
<reference key="2">
    <citation type="journal article" date="2017" name="Genome Announc.">
        <title>Updated reference genome sequence and annotation of Mycobacterium bovis AF2122/97.</title>
        <authorList>
            <person name="Malone K.M."/>
            <person name="Farrell D."/>
            <person name="Stuber T.P."/>
            <person name="Schubert O.T."/>
            <person name="Aebersold R."/>
            <person name="Robbe-Austerman S."/>
            <person name="Gordon S.V."/>
        </authorList>
    </citation>
    <scope>NUCLEOTIDE SEQUENCE [LARGE SCALE GENOMIC DNA]</scope>
    <scope>GENOME REANNOTATION</scope>
    <source>
        <strain>ATCC BAA-935 / AF2122/97</strain>
    </source>
</reference>
<dbReference type="EMBL" id="LT708304">
    <property type="protein sequence ID" value="SIT99443.1"/>
    <property type="molecule type" value="Genomic_DNA"/>
</dbReference>
<dbReference type="RefSeq" id="NP_854502.1">
    <property type="nucleotide sequence ID" value="NC_002945.3"/>
</dbReference>
<dbReference type="SMR" id="P65721"/>
<dbReference type="KEGG" id="mbo:BQ2027_MB0844C"/>
<dbReference type="PATRIC" id="fig|233413.5.peg.917"/>
<dbReference type="Proteomes" id="UP000001419">
    <property type="component" value="Chromosome"/>
</dbReference>
<dbReference type="GO" id="GO:0005737">
    <property type="term" value="C:cytoplasm"/>
    <property type="evidence" value="ECO:0000250"/>
    <property type="project" value="UniProtKB"/>
</dbReference>
<dbReference type="GO" id="GO:0042803">
    <property type="term" value="F:protein homodimerization activity"/>
    <property type="evidence" value="ECO:0000250"/>
    <property type="project" value="UniProtKB"/>
</dbReference>
<dbReference type="GO" id="GO:0030643">
    <property type="term" value="P:intracellular phosphate ion homeostasis"/>
    <property type="evidence" value="ECO:0007669"/>
    <property type="project" value="InterPro"/>
</dbReference>
<dbReference type="GO" id="GO:0045936">
    <property type="term" value="P:negative regulation of phosphate metabolic process"/>
    <property type="evidence" value="ECO:0000250"/>
    <property type="project" value="UniProtKB"/>
</dbReference>
<dbReference type="GO" id="GO:2000186">
    <property type="term" value="P:negative regulation of phosphate transmembrane transport"/>
    <property type="evidence" value="ECO:0000250"/>
    <property type="project" value="UniProtKB"/>
</dbReference>
<dbReference type="GO" id="GO:0006817">
    <property type="term" value="P:phosphate ion transport"/>
    <property type="evidence" value="ECO:0007669"/>
    <property type="project" value="UniProtKB-KW"/>
</dbReference>
<dbReference type="FunFam" id="1.20.58.220:FF:000004">
    <property type="entry name" value="Phosphate-specific transport system accessory protein PhoU"/>
    <property type="match status" value="1"/>
</dbReference>
<dbReference type="Gene3D" id="1.20.58.220">
    <property type="entry name" value="Phosphate transport system protein phou homolog 2, domain 2"/>
    <property type="match status" value="1"/>
</dbReference>
<dbReference type="InterPro" id="IPR028366">
    <property type="entry name" value="P_transport_PhoU"/>
</dbReference>
<dbReference type="InterPro" id="IPR038078">
    <property type="entry name" value="PhoU-like_sf"/>
</dbReference>
<dbReference type="InterPro" id="IPR026022">
    <property type="entry name" value="PhoU_dom"/>
</dbReference>
<dbReference type="NCBIfam" id="TIGR02135">
    <property type="entry name" value="phoU_full"/>
    <property type="match status" value="1"/>
</dbReference>
<dbReference type="PANTHER" id="PTHR42930">
    <property type="entry name" value="PHOSPHATE-SPECIFIC TRANSPORT SYSTEM ACCESSORY PROTEIN PHOU"/>
    <property type="match status" value="1"/>
</dbReference>
<dbReference type="PANTHER" id="PTHR42930:SF3">
    <property type="entry name" value="PHOSPHATE-SPECIFIC TRANSPORT SYSTEM ACCESSORY PROTEIN PHOU"/>
    <property type="match status" value="1"/>
</dbReference>
<dbReference type="Pfam" id="PF01895">
    <property type="entry name" value="PhoU"/>
    <property type="match status" value="2"/>
</dbReference>
<dbReference type="PIRSF" id="PIRSF003107">
    <property type="entry name" value="PhoU"/>
    <property type="match status" value="1"/>
</dbReference>
<dbReference type="SUPFAM" id="SSF109755">
    <property type="entry name" value="PhoU-like"/>
    <property type="match status" value="1"/>
</dbReference>
<accession>P65721</accession>
<accession>A0A1R3XXH7</accession>
<accession>O53833</accession>
<accession>X2BG89</accession>
<proteinExistence type="inferred from homology"/>
<comment type="function">
    <text evidence="1">Plays a role in the regulation of phosphate uptake. In this role, it may bind, possibly as a chaperone, to PhoR, PhoP or a PhoR-PhoP complex to promote dephosphorylation of phospho-PhoP, or inhibit formation of the PhoR-PhoP transitory complex (By similarity).</text>
</comment>
<comment type="subunit">
    <text evidence="1">Homodimer.</text>
</comment>
<comment type="subcellular location">
    <subcellularLocation>
        <location evidence="1">Cytoplasm</location>
    </subcellularLocation>
</comment>
<comment type="similarity">
    <text evidence="2">Belongs to the PhoU family.</text>
</comment>
<name>PHOU2_MYCBO</name>